<proteinExistence type="inferred from homology"/>
<dbReference type="EMBL" id="CP000993">
    <property type="protein sequence ID" value="ACH94721.1"/>
    <property type="molecule type" value="Genomic_DNA"/>
</dbReference>
<dbReference type="RefSeq" id="WP_012538935.1">
    <property type="nucleotide sequence ID" value="NC_011244.1"/>
</dbReference>
<dbReference type="SMR" id="B5RPI7"/>
<dbReference type="KEGG" id="bre:BRE_489"/>
<dbReference type="HOGENOM" id="CLU_083987_3_1_12"/>
<dbReference type="Proteomes" id="UP000000612">
    <property type="component" value="Chromosome"/>
</dbReference>
<dbReference type="GO" id="GO:0022625">
    <property type="term" value="C:cytosolic large ribosomal subunit"/>
    <property type="evidence" value="ECO:0007669"/>
    <property type="project" value="TreeGrafter"/>
</dbReference>
<dbReference type="GO" id="GO:0019843">
    <property type="term" value="F:rRNA binding"/>
    <property type="evidence" value="ECO:0007669"/>
    <property type="project" value="UniProtKB-UniRule"/>
</dbReference>
<dbReference type="GO" id="GO:0003735">
    <property type="term" value="F:structural constituent of ribosome"/>
    <property type="evidence" value="ECO:0007669"/>
    <property type="project" value="InterPro"/>
</dbReference>
<dbReference type="GO" id="GO:0006412">
    <property type="term" value="P:translation"/>
    <property type="evidence" value="ECO:0007669"/>
    <property type="project" value="UniProtKB-UniRule"/>
</dbReference>
<dbReference type="CDD" id="cd00336">
    <property type="entry name" value="Ribosomal_L22"/>
    <property type="match status" value="1"/>
</dbReference>
<dbReference type="Gene3D" id="3.90.470.10">
    <property type="entry name" value="Ribosomal protein L22/L17"/>
    <property type="match status" value="1"/>
</dbReference>
<dbReference type="HAMAP" id="MF_01331_B">
    <property type="entry name" value="Ribosomal_uL22_B"/>
    <property type="match status" value="1"/>
</dbReference>
<dbReference type="InterPro" id="IPR001063">
    <property type="entry name" value="Ribosomal_uL22"/>
</dbReference>
<dbReference type="InterPro" id="IPR005727">
    <property type="entry name" value="Ribosomal_uL22_bac/chlpt-type"/>
</dbReference>
<dbReference type="InterPro" id="IPR047867">
    <property type="entry name" value="Ribosomal_uL22_bac/org-type"/>
</dbReference>
<dbReference type="InterPro" id="IPR018260">
    <property type="entry name" value="Ribosomal_uL22_CS"/>
</dbReference>
<dbReference type="InterPro" id="IPR036394">
    <property type="entry name" value="Ribosomal_uL22_sf"/>
</dbReference>
<dbReference type="NCBIfam" id="TIGR01044">
    <property type="entry name" value="rplV_bact"/>
    <property type="match status" value="1"/>
</dbReference>
<dbReference type="PANTHER" id="PTHR13501">
    <property type="entry name" value="CHLOROPLAST 50S RIBOSOMAL PROTEIN L22-RELATED"/>
    <property type="match status" value="1"/>
</dbReference>
<dbReference type="PANTHER" id="PTHR13501:SF8">
    <property type="entry name" value="LARGE RIBOSOMAL SUBUNIT PROTEIN UL22M"/>
    <property type="match status" value="1"/>
</dbReference>
<dbReference type="Pfam" id="PF00237">
    <property type="entry name" value="Ribosomal_L22"/>
    <property type="match status" value="1"/>
</dbReference>
<dbReference type="SUPFAM" id="SSF54843">
    <property type="entry name" value="Ribosomal protein L22"/>
    <property type="match status" value="1"/>
</dbReference>
<dbReference type="PROSITE" id="PS00464">
    <property type="entry name" value="RIBOSOMAL_L22"/>
    <property type="match status" value="1"/>
</dbReference>
<keyword id="KW-0687">Ribonucleoprotein</keyword>
<keyword id="KW-0689">Ribosomal protein</keyword>
<keyword id="KW-0694">RNA-binding</keyword>
<keyword id="KW-0699">rRNA-binding</keyword>
<comment type="function">
    <text evidence="1">This protein binds specifically to 23S rRNA; its binding is stimulated by other ribosomal proteins, e.g. L4, L17, and L20. It is important during the early stages of 50S assembly. It makes multiple contacts with different domains of the 23S rRNA in the assembled 50S subunit and ribosome (By similarity).</text>
</comment>
<comment type="function">
    <text evidence="1">The globular domain of the protein is located near the polypeptide exit tunnel on the outside of the subunit, while an extended beta-hairpin is found that lines the wall of the exit tunnel in the center of the 70S ribosome.</text>
</comment>
<comment type="subunit">
    <text evidence="1">Part of the 50S ribosomal subunit.</text>
</comment>
<comment type="similarity">
    <text evidence="1">Belongs to the universal ribosomal protein uL22 family.</text>
</comment>
<organism>
    <name type="scientific">Borrelia recurrentis (strain A1)</name>
    <dbReference type="NCBI Taxonomy" id="412418"/>
    <lineage>
        <taxon>Bacteria</taxon>
        <taxon>Pseudomonadati</taxon>
        <taxon>Spirochaetota</taxon>
        <taxon>Spirochaetia</taxon>
        <taxon>Spirochaetales</taxon>
        <taxon>Borreliaceae</taxon>
        <taxon>Borrelia</taxon>
    </lineage>
</organism>
<reference key="1">
    <citation type="journal article" date="2008" name="PLoS Genet.">
        <title>The genome of Borrelia recurrentis, the agent of deadly louse-borne relapsing fever, is a degraded subset of tick-borne Borrelia duttonii.</title>
        <authorList>
            <person name="Lescot M."/>
            <person name="Audic S."/>
            <person name="Robert C."/>
            <person name="Nguyen T.T."/>
            <person name="Blanc G."/>
            <person name="Cutler S.J."/>
            <person name="Wincker P."/>
            <person name="Couloux A."/>
            <person name="Claverie J.-M."/>
            <person name="Raoult D."/>
            <person name="Drancourt M."/>
        </authorList>
    </citation>
    <scope>NUCLEOTIDE SEQUENCE [LARGE SCALE GENOMIC DNA]</scope>
    <source>
        <strain>A1</strain>
    </source>
</reference>
<sequence>MFVNKKYTAKGKNLPSSPKKVRPIANNIRGKPYNEAIAILCSMPNKGAKLLGKVVKSAASNAMYHNRNLSEDMIFVKTVMVDDGRKRRSIWPRARGRADRLINRSCHIFVEVYEKMYGGE</sequence>
<feature type="chain" id="PRO_1000142237" description="Large ribosomal subunit protein uL22">
    <location>
        <begin position="1"/>
        <end position="120"/>
    </location>
</feature>
<feature type="region of interest" description="Disordered" evidence="2">
    <location>
        <begin position="1"/>
        <end position="25"/>
    </location>
</feature>
<protein>
    <recommendedName>
        <fullName evidence="1">Large ribosomal subunit protein uL22</fullName>
    </recommendedName>
    <alternativeName>
        <fullName evidence="3">50S ribosomal protein L22</fullName>
    </alternativeName>
</protein>
<accession>B5RPI7</accession>
<name>RL22_BORRA</name>
<gene>
    <name evidence="1" type="primary">rplV</name>
    <name type="ordered locus">BRE_489</name>
</gene>
<evidence type="ECO:0000255" key="1">
    <source>
        <dbReference type="HAMAP-Rule" id="MF_01331"/>
    </source>
</evidence>
<evidence type="ECO:0000256" key="2">
    <source>
        <dbReference type="SAM" id="MobiDB-lite"/>
    </source>
</evidence>
<evidence type="ECO:0000305" key="3"/>